<keyword id="KW-0010">Activator</keyword>
<keyword id="KW-0963">Cytoplasm</keyword>
<keyword id="KW-0238">DNA-binding</keyword>
<keyword id="KW-0597">Phosphoprotein</keyword>
<keyword id="KW-0804">Transcription</keyword>
<keyword id="KW-0805">Transcription regulation</keyword>
<keyword id="KW-0902">Two-component regulatory system</keyword>
<proteinExistence type="evidence at protein level"/>
<sequence length="227" mass="25432">MPARWGCLFPGKYPCQTGLRHMSDRASVIYILDDDNAVLEALSSLVRSIGLSVECFSSASVFLNDVNRSACGCLILDVRMPEMSGLDVQRQLKELGEQIPIIFISGHGDIPMAVKAIKAGAVDFFTKPFREEELLGAIRAALKLAPQQRSNAPRVSELKENYESLSKREQQVLKFVLRGYLNKQTALELDISEATVKVHRHNIMRKMKVSSIQDLVRVTERLKDSLE</sequence>
<feature type="chain" id="PRO_0000423594" description="Response regulator protein TodT">
    <location>
        <begin position="1"/>
        <end position="227"/>
    </location>
</feature>
<feature type="domain" description="Response regulatory" evidence="2">
    <location>
        <begin position="28"/>
        <end position="142"/>
    </location>
</feature>
<feature type="domain" description="HTH luxR-type" evidence="3">
    <location>
        <begin position="158"/>
        <end position="223"/>
    </location>
</feature>
<feature type="DNA-binding region" description="H-T-H motif" evidence="3">
    <location>
        <begin position="182"/>
        <end position="201"/>
    </location>
</feature>
<feature type="modified residue" description="4-aspartylphosphate" evidence="5">
    <location>
        <position position="77"/>
    </location>
</feature>
<feature type="mutagenesis site" description="Lacks regulatory activity but can still bind DNA." evidence="4">
    <original>D</original>
    <variation>N</variation>
    <location>
        <position position="77"/>
    </location>
</feature>
<name>TODT_PSEP1</name>
<reference key="1">
    <citation type="journal article" date="1997" name="Proc. Natl. Acad. Sci. U.S.A.">
        <title>A bacterial basic region leucine zipper histidine kinase regulating toluene degradation.</title>
        <authorList>
            <person name="Lau P.C."/>
            <person name="Wang Y."/>
            <person name="Patel A."/>
            <person name="Labbe D."/>
            <person name="Bergeron H."/>
            <person name="Brousseau R."/>
            <person name="Konishi Y."/>
            <person name="Rawlings M."/>
        </authorList>
    </citation>
    <scope>NUCLEOTIDE SEQUENCE [GENOMIC DNA]</scope>
    <scope>FUNCTION</scope>
    <scope>DNA-BINDING</scope>
    <scope>DISRUPTION PHENOTYPE</scope>
    <scope>GENE NAME</scope>
    <scope>MUTAGENESIS OF ASP-77</scope>
    <source>
        <strain>ATCC 700007 / DSM 6899 / JCM 31910 / BCRC 17059 / LMG 24140 / F1</strain>
    </source>
</reference>
<reference key="2">
    <citation type="submission" date="2007-05" db="EMBL/GenBank/DDBJ databases">
        <title>Complete sequence of Pseudomonas putida F1.</title>
        <authorList>
            <consortium name="US DOE Joint Genome Institute"/>
            <person name="Copeland A."/>
            <person name="Lucas S."/>
            <person name="Lapidus A."/>
            <person name="Barry K."/>
            <person name="Detter J.C."/>
            <person name="Glavina del Rio T."/>
            <person name="Hammon N."/>
            <person name="Israni S."/>
            <person name="Dalin E."/>
            <person name="Tice H."/>
            <person name="Pitluck S."/>
            <person name="Chain P."/>
            <person name="Malfatti S."/>
            <person name="Shin M."/>
            <person name="Vergez L."/>
            <person name="Schmutz J."/>
            <person name="Larimer F."/>
            <person name="Land M."/>
            <person name="Hauser L."/>
            <person name="Kyrpides N."/>
            <person name="Lykidis A."/>
            <person name="Parales R."/>
            <person name="Richardson P."/>
        </authorList>
    </citation>
    <scope>NUCLEOTIDE SEQUENCE [LARGE SCALE GENOMIC DNA]</scope>
    <source>
        <strain>ATCC 700007 / DSM 6899 / JCM 31910 / BCRC 17059 / LMG 24140 / F1</strain>
    </source>
</reference>
<evidence type="ECO:0000250" key="1"/>
<evidence type="ECO:0000255" key="2">
    <source>
        <dbReference type="PROSITE-ProRule" id="PRU00169"/>
    </source>
</evidence>
<evidence type="ECO:0000255" key="3">
    <source>
        <dbReference type="PROSITE-ProRule" id="PRU00411"/>
    </source>
</evidence>
<evidence type="ECO:0000269" key="4">
    <source>
    </source>
</evidence>
<evidence type="ECO:0000305" key="5"/>
<organism>
    <name type="scientific">Pseudomonas putida (strain ATCC 700007 / DSM 6899 / JCM 31910 / BCRC 17059 / LMG 24140 / F1)</name>
    <dbReference type="NCBI Taxonomy" id="351746"/>
    <lineage>
        <taxon>Bacteria</taxon>
        <taxon>Pseudomonadati</taxon>
        <taxon>Pseudomonadota</taxon>
        <taxon>Gammaproteobacteria</taxon>
        <taxon>Pseudomonadales</taxon>
        <taxon>Pseudomonadaceae</taxon>
        <taxon>Pseudomonas</taxon>
    </lineage>
</organism>
<protein>
    <recommendedName>
        <fullName>Response regulator protein TodT</fullName>
    </recommendedName>
</protein>
<gene>
    <name type="primary">todT</name>
    <name type="ordered locus">Pput_2871</name>
</gene>
<comment type="function">
    <text evidence="4">Member of the two-component regulatory system TodS/TodT involved in the regulation of toluene degradation. Phosphorylated TodT activates transcription of the tod operon (todXFC1C2BADEGIH). Binds specifically to a 6-bp palindromic DNA structure in the tod promoter region.</text>
</comment>
<comment type="subcellular location">
    <subcellularLocation>
        <location evidence="1">Cytoplasm</location>
    </subcellularLocation>
</comment>
<comment type="PTM">
    <text evidence="1">Phosphorylated by TodS.</text>
</comment>
<comment type="disruption phenotype">
    <text evidence="4">Mutants are unable to use toluene as the sole carbon source, are incapable of converting indole to indigo and do not have catechol dioxygenase activity.</text>
</comment>
<comment type="sequence caution" evidence="5">
    <conflict type="erroneous initiation">
        <sequence resource="EMBL-CDS" id="ABQ79002"/>
    </conflict>
    <text>Truncated N-terminus.</text>
</comment>
<dbReference type="EMBL" id="U72354">
    <property type="protein sequence ID" value="AAC45439.1"/>
    <property type="molecule type" value="Genomic_DNA"/>
</dbReference>
<dbReference type="EMBL" id="CP000712">
    <property type="protein sequence ID" value="ABQ79002.1"/>
    <property type="status" value="ALT_INIT"/>
    <property type="molecule type" value="Genomic_DNA"/>
</dbReference>
<dbReference type="SMR" id="A5W4E2"/>
<dbReference type="KEGG" id="ppf:Pput_2871"/>
<dbReference type="eggNOG" id="COG4566">
    <property type="taxonomic scope" value="Bacteria"/>
</dbReference>
<dbReference type="HOGENOM" id="CLU_000445_90_4_6"/>
<dbReference type="GO" id="GO:0005737">
    <property type="term" value="C:cytoplasm"/>
    <property type="evidence" value="ECO:0007669"/>
    <property type="project" value="UniProtKB-SubCell"/>
</dbReference>
<dbReference type="GO" id="GO:0003677">
    <property type="term" value="F:DNA binding"/>
    <property type="evidence" value="ECO:0007669"/>
    <property type="project" value="UniProtKB-KW"/>
</dbReference>
<dbReference type="GO" id="GO:0000160">
    <property type="term" value="P:phosphorelay signal transduction system"/>
    <property type="evidence" value="ECO:0007669"/>
    <property type="project" value="UniProtKB-KW"/>
</dbReference>
<dbReference type="GO" id="GO:0006355">
    <property type="term" value="P:regulation of DNA-templated transcription"/>
    <property type="evidence" value="ECO:0007669"/>
    <property type="project" value="InterPro"/>
</dbReference>
<dbReference type="CDD" id="cd06170">
    <property type="entry name" value="LuxR_C_like"/>
    <property type="match status" value="1"/>
</dbReference>
<dbReference type="CDD" id="cd17537">
    <property type="entry name" value="REC_FixJ"/>
    <property type="match status" value="1"/>
</dbReference>
<dbReference type="FunFam" id="3.40.50.2300:FF:000018">
    <property type="entry name" value="DNA-binding transcriptional regulator NtrC"/>
    <property type="match status" value="1"/>
</dbReference>
<dbReference type="FunFam" id="1.10.10.10:FF:000876">
    <property type="entry name" value="Response regulator protein TodT"/>
    <property type="match status" value="1"/>
</dbReference>
<dbReference type="Gene3D" id="3.40.50.2300">
    <property type="match status" value="1"/>
</dbReference>
<dbReference type="Gene3D" id="1.10.10.10">
    <property type="entry name" value="Winged helix-like DNA-binding domain superfamily/Winged helix DNA-binding domain"/>
    <property type="match status" value="1"/>
</dbReference>
<dbReference type="InterPro" id="IPR011006">
    <property type="entry name" value="CheY-like_superfamily"/>
</dbReference>
<dbReference type="InterPro" id="IPR016032">
    <property type="entry name" value="Sig_transdc_resp-reg_C-effctor"/>
</dbReference>
<dbReference type="InterPro" id="IPR001789">
    <property type="entry name" value="Sig_transdc_resp-reg_receiver"/>
</dbReference>
<dbReference type="InterPro" id="IPR000792">
    <property type="entry name" value="Tscrpt_reg_LuxR_C"/>
</dbReference>
<dbReference type="InterPro" id="IPR036388">
    <property type="entry name" value="WH-like_DNA-bd_sf"/>
</dbReference>
<dbReference type="PANTHER" id="PTHR44688">
    <property type="entry name" value="DNA-BINDING TRANSCRIPTIONAL ACTIVATOR DEVR_DOSR"/>
    <property type="match status" value="1"/>
</dbReference>
<dbReference type="PANTHER" id="PTHR44688:SF16">
    <property type="entry name" value="DNA-BINDING TRANSCRIPTIONAL ACTIVATOR DEVR_DOSR"/>
    <property type="match status" value="1"/>
</dbReference>
<dbReference type="Pfam" id="PF00196">
    <property type="entry name" value="GerE"/>
    <property type="match status" value="1"/>
</dbReference>
<dbReference type="Pfam" id="PF00072">
    <property type="entry name" value="Response_reg"/>
    <property type="match status" value="1"/>
</dbReference>
<dbReference type="PRINTS" id="PR00038">
    <property type="entry name" value="HTHLUXR"/>
</dbReference>
<dbReference type="SMART" id="SM00421">
    <property type="entry name" value="HTH_LUXR"/>
    <property type="match status" value="1"/>
</dbReference>
<dbReference type="SMART" id="SM00448">
    <property type="entry name" value="REC"/>
    <property type="match status" value="1"/>
</dbReference>
<dbReference type="SUPFAM" id="SSF46894">
    <property type="entry name" value="C-terminal effector domain of the bipartite response regulators"/>
    <property type="match status" value="1"/>
</dbReference>
<dbReference type="SUPFAM" id="SSF52172">
    <property type="entry name" value="CheY-like"/>
    <property type="match status" value="1"/>
</dbReference>
<dbReference type="PROSITE" id="PS50043">
    <property type="entry name" value="HTH_LUXR_2"/>
    <property type="match status" value="1"/>
</dbReference>
<dbReference type="PROSITE" id="PS50110">
    <property type="entry name" value="RESPONSE_REGULATORY"/>
    <property type="match status" value="1"/>
</dbReference>
<accession>A5W4E2</accession>
<accession>O07832</accession>